<accession>Q31L12</accession>
<sequence length="117" mass="13253">MAVDTANEVKAIARYIRMSPSKVRRVLDQLRGRSYREALILLEFMPYKSCEPILKVLRSAVANAEHNQGLDPTQLVISQAYADMGPSLKRFRPRAQGRAYQIRKQTCHITIAVAPQV</sequence>
<dbReference type="EMBL" id="CP000100">
    <property type="protein sequence ID" value="ABB58257.1"/>
    <property type="molecule type" value="Genomic_DNA"/>
</dbReference>
<dbReference type="RefSeq" id="WP_011244180.1">
    <property type="nucleotide sequence ID" value="NZ_JACJTX010000001.1"/>
</dbReference>
<dbReference type="SMR" id="Q31L12"/>
<dbReference type="STRING" id="1140.Synpcc7942_2227"/>
<dbReference type="PaxDb" id="1140-Synpcc7942_2227"/>
<dbReference type="GeneID" id="72431110"/>
<dbReference type="KEGG" id="syf:Synpcc7942_2227"/>
<dbReference type="eggNOG" id="COG0091">
    <property type="taxonomic scope" value="Bacteria"/>
</dbReference>
<dbReference type="HOGENOM" id="CLU_083987_3_2_3"/>
<dbReference type="OrthoDB" id="9805969at2"/>
<dbReference type="BioCyc" id="SYNEL:SYNPCC7942_2227-MONOMER"/>
<dbReference type="Proteomes" id="UP000889800">
    <property type="component" value="Chromosome"/>
</dbReference>
<dbReference type="GO" id="GO:0022625">
    <property type="term" value="C:cytosolic large ribosomal subunit"/>
    <property type="evidence" value="ECO:0007669"/>
    <property type="project" value="TreeGrafter"/>
</dbReference>
<dbReference type="GO" id="GO:0019843">
    <property type="term" value="F:rRNA binding"/>
    <property type="evidence" value="ECO:0007669"/>
    <property type="project" value="UniProtKB-UniRule"/>
</dbReference>
<dbReference type="GO" id="GO:0003735">
    <property type="term" value="F:structural constituent of ribosome"/>
    <property type="evidence" value="ECO:0007669"/>
    <property type="project" value="InterPro"/>
</dbReference>
<dbReference type="GO" id="GO:0006412">
    <property type="term" value="P:translation"/>
    <property type="evidence" value="ECO:0007669"/>
    <property type="project" value="UniProtKB-UniRule"/>
</dbReference>
<dbReference type="CDD" id="cd00336">
    <property type="entry name" value="Ribosomal_L22"/>
    <property type="match status" value="1"/>
</dbReference>
<dbReference type="FunFam" id="3.90.470.10:FF:000004">
    <property type="entry name" value="50S ribosomal protein L22, chloroplastic"/>
    <property type="match status" value="1"/>
</dbReference>
<dbReference type="Gene3D" id="3.90.470.10">
    <property type="entry name" value="Ribosomal protein L22/L17"/>
    <property type="match status" value="1"/>
</dbReference>
<dbReference type="HAMAP" id="MF_01331_B">
    <property type="entry name" value="Ribosomal_uL22_B"/>
    <property type="match status" value="1"/>
</dbReference>
<dbReference type="InterPro" id="IPR001063">
    <property type="entry name" value="Ribosomal_uL22"/>
</dbReference>
<dbReference type="InterPro" id="IPR005727">
    <property type="entry name" value="Ribosomal_uL22_bac/chlpt-type"/>
</dbReference>
<dbReference type="InterPro" id="IPR047867">
    <property type="entry name" value="Ribosomal_uL22_bac/org-type"/>
</dbReference>
<dbReference type="InterPro" id="IPR018260">
    <property type="entry name" value="Ribosomal_uL22_CS"/>
</dbReference>
<dbReference type="InterPro" id="IPR036394">
    <property type="entry name" value="Ribosomal_uL22_sf"/>
</dbReference>
<dbReference type="NCBIfam" id="TIGR01044">
    <property type="entry name" value="rplV_bact"/>
    <property type="match status" value="1"/>
</dbReference>
<dbReference type="PANTHER" id="PTHR13501">
    <property type="entry name" value="CHLOROPLAST 50S RIBOSOMAL PROTEIN L22-RELATED"/>
    <property type="match status" value="1"/>
</dbReference>
<dbReference type="PANTHER" id="PTHR13501:SF8">
    <property type="entry name" value="LARGE RIBOSOMAL SUBUNIT PROTEIN UL22M"/>
    <property type="match status" value="1"/>
</dbReference>
<dbReference type="Pfam" id="PF00237">
    <property type="entry name" value="Ribosomal_L22"/>
    <property type="match status" value="1"/>
</dbReference>
<dbReference type="SUPFAM" id="SSF54843">
    <property type="entry name" value="Ribosomal protein L22"/>
    <property type="match status" value="1"/>
</dbReference>
<dbReference type="PROSITE" id="PS00464">
    <property type="entry name" value="RIBOSOMAL_L22"/>
    <property type="match status" value="1"/>
</dbReference>
<comment type="function">
    <text evidence="1">This protein binds specifically to 23S rRNA; its binding is stimulated by other ribosomal proteins, e.g. L4, L17, and L20. It is important during the early stages of 50S assembly. It makes multiple contacts with different domains of the 23S rRNA in the assembled 50S subunit and ribosome (By similarity).</text>
</comment>
<comment type="function">
    <text evidence="1">The globular domain of the protein is located near the polypeptide exit tunnel on the outside of the subunit, while an extended beta-hairpin is found that lines the wall of the exit tunnel in the center of the 70S ribosome.</text>
</comment>
<comment type="subunit">
    <text evidence="1">Part of the 50S ribosomal subunit.</text>
</comment>
<comment type="similarity">
    <text evidence="1">Belongs to the universal ribosomal protein uL22 family.</text>
</comment>
<evidence type="ECO:0000255" key="1">
    <source>
        <dbReference type="HAMAP-Rule" id="MF_01331"/>
    </source>
</evidence>
<evidence type="ECO:0000305" key="2"/>
<reference key="1">
    <citation type="submission" date="2005-08" db="EMBL/GenBank/DDBJ databases">
        <title>Complete sequence of chromosome 1 of Synechococcus elongatus PCC 7942.</title>
        <authorList>
            <consortium name="US DOE Joint Genome Institute"/>
            <person name="Copeland A."/>
            <person name="Lucas S."/>
            <person name="Lapidus A."/>
            <person name="Barry K."/>
            <person name="Detter J.C."/>
            <person name="Glavina T."/>
            <person name="Hammon N."/>
            <person name="Israni S."/>
            <person name="Pitluck S."/>
            <person name="Schmutz J."/>
            <person name="Larimer F."/>
            <person name="Land M."/>
            <person name="Kyrpides N."/>
            <person name="Lykidis A."/>
            <person name="Golden S."/>
            <person name="Richardson P."/>
        </authorList>
    </citation>
    <scope>NUCLEOTIDE SEQUENCE [LARGE SCALE GENOMIC DNA]</scope>
    <source>
        <strain>ATCC 33912 / PCC 7942 / FACHB-805</strain>
    </source>
</reference>
<keyword id="KW-1185">Reference proteome</keyword>
<keyword id="KW-0687">Ribonucleoprotein</keyword>
<keyword id="KW-0689">Ribosomal protein</keyword>
<keyword id="KW-0694">RNA-binding</keyword>
<keyword id="KW-0699">rRNA-binding</keyword>
<protein>
    <recommendedName>
        <fullName evidence="1">Large ribosomal subunit protein uL22</fullName>
    </recommendedName>
    <alternativeName>
        <fullName evidence="2">50S ribosomal protein L22</fullName>
    </alternativeName>
</protein>
<feature type="chain" id="PRO_0000243220" description="Large ribosomal subunit protein uL22">
    <location>
        <begin position="1"/>
        <end position="117"/>
    </location>
</feature>
<name>RL22_SYNE7</name>
<organism>
    <name type="scientific">Synechococcus elongatus (strain ATCC 33912 / PCC 7942 / FACHB-805)</name>
    <name type="common">Anacystis nidulans R2</name>
    <dbReference type="NCBI Taxonomy" id="1140"/>
    <lineage>
        <taxon>Bacteria</taxon>
        <taxon>Bacillati</taxon>
        <taxon>Cyanobacteriota</taxon>
        <taxon>Cyanophyceae</taxon>
        <taxon>Synechococcales</taxon>
        <taxon>Synechococcaceae</taxon>
        <taxon>Synechococcus</taxon>
    </lineage>
</organism>
<proteinExistence type="inferred from homology"/>
<gene>
    <name evidence="1" type="primary">rplV</name>
    <name evidence="1" type="synonym">rpl22</name>
    <name type="ordered locus">Synpcc7942_2227</name>
</gene>